<name>NOLE_RHILP</name>
<geneLocation type="plasmid">
    <name>sym</name>
</geneLocation>
<feature type="signal peptide" evidence="1">
    <location>
        <begin position="1"/>
        <end position="25"/>
    </location>
</feature>
<feature type="chain" id="PRO_0000021817" description="Nodulation protein NolE">
    <location>
        <begin position="26"/>
        <end position="110"/>
    </location>
</feature>
<feature type="region of interest" description="Disordered" evidence="2">
    <location>
        <begin position="27"/>
        <end position="64"/>
    </location>
</feature>
<feature type="compositionally biased region" description="Basic and acidic residues" evidence="2">
    <location>
        <begin position="48"/>
        <end position="57"/>
    </location>
</feature>
<proteinExistence type="inferred from homology"/>
<protein>
    <recommendedName>
        <fullName>Nodulation protein NolE</fullName>
    </recommendedName>
</protein>
<organism>
    <name type="scientific">Rhizobium leguminosarum bv. phaseoli</name>
    <dbReference type="NCBI Taxonomy" id="385"/>
    <lineage>
        <taxon>Bacteria</taxon>
        <taxon>Pseudomonadati</taxon>
        <taxon>Pseudomonadota</taxon>
        <taxon>Alphaproteobacteria</taxon>
        <taxon>Hyphomicrobiales</taxon>
        <taxon>Rhizobiaceae</taxon>
        <taxon>Rhizobium/Agrobacterium group</taxon>
        <taxon>Rhizobium</taxon>
    </lineage>
</organism>
<evidence type="ECO:0000255" key="1"/>
<evidence type="ECO:0000256" key="2">
    <source>
        <dbReference type="SAM" id="MobiDB-lite"/>
    </source>
</evidence>
<evidence type="ECO:0000305" key="3"/>
<reference key="1">
    <citation type="journal article" date="1990" name="Mol. Microbiol.">
        <title>Analysis of three nodD genes in Rhizobium leguminosarum biovar phaseoli; nodD1 is preceded by noIE, a gene whose product is secreted from the cytoplasm.</title>
        <authorList>
            <person name="Davis E.O."/>
            <person name="Johnston A.W.B."/>
        </authorList>
    </citation>
    <scope>NUCLEOTIDE SEQUENCE [GENOMIC DNA]</scope>
    <source>
        <strain>8002</strain>
    </source>
</reference>
<dbReference type="EMBL" id="X54214">
    <property type="protein sequence ID" value="CAA38125.1"/>
    <property type="molecule type" value="Genomic_DNA"/>
</dbReference>
<dbReference type="PIR" id="S11786">
    <property type="entry name" value="S11786"/>
</dbReference>
<dbReference type="RefSeq" id="WP_018247213.1">
    <property type="nucleotide sequence ID" value="NZ_WNKD01000037.1"/>
</dbReference>
<dbReference type="GO" id="GO:0042597">
    <property type="term" value="C:periplasmic space"/>
    <property type="evidence" value="ECO:0007669"/>
    <property type="project" value="UniProtKB-SubCell"/>
</dbReference>
<keyword id="KW-0536">Nodulation</keyword>
<keyword id="KW-0574">Periplasm</keyword>
<keyword id="KW-0614">Plasmid</keyword>
<keyword id="KW-0732">Signal</keyword>
<gene>
    <name type="primary">nolE</name>
</gene>
<accession>P23716</accession>
<sequence>MKVTGYYVIVAALLALALRAGPSLAADDRNQDCGPATSDPRANLNGADKAHSAEHTQDFNCQDTPAEEGECYECVLPPEVRIEGAEVIDVADRNFYPRKTLLLARMIRHH</sequence>
<comment type="subcellular location">
    <subcellularLocation>
        <location evidence="3">Periplasm</location>
    </subcellularLocation>
</comment>